<sequence length="736" mass="79580">MNPCNNITITPEIIAQHGLKEDEYQRILTLIGREPTFTELGIFSAMWNEHCSYKSSKKWLKTLPTEGKCVIQGPGENAGVVDIGEGQCVVFKMESHNHPSYIEPYQGAATGVGGILRDVFTMGARPVAAMNALRFGAPDHPRTRHLVSGVVSGIGGYSNSFGVPTVGGEVNFDKRYNGNILVNAFVAGIAKTDALFYSKAQGIGLPVVYLGAKTGRDGVGGATMASAEFDDSISEKRPTVQVGDPFTEKCLLEACLELMELGAVVAIQDMGAAGLTSSAVEMGAKGNLGIQLNLDTVPVREENMTAYEMMLSESQERMLMVLKPELEKQAAAIFHKWGLHFSIIGKTTDDLRFRVFHQGEEVVNLPIKELGDEAPVYDRPWSEPVKKTLLKAEDVKKVENLGDALLTLLNSADQSSRRWVYEQYDTLIQGNSLICPGSDAGVIRISNKSKRALAFSSDVTPRYCEADPYEGGKQAVAECWRNISTTGATPLAATDNLNFGNPEKPEIMGQLVFAIKGIGEACRILDFPIVSGNVSLYNETNGGAILPTPTIAGVGLLSDWSKMVTISGMQNGDHIILVGDCGSHLGQSIYARDILNIDAGAPPPVDLQLEKRHGQFVRDVIHNGFVHAAHDISDGGLAIALAEMVIKAGKGIKAKLSNKSPHHAELFGEDQGRYLLAVKPEALNNLKEYAQTHAVSLTELGQVEGDSLNIDGIFTLSVESLIQAYENWFPKFMGEE</sequence>
<evidence type="ECO:0000255" key="1">
    <source>
        <dbReference type="HAMAP-Rule" id="MF_00420"/>
    </source>
</evidence>
<name>PURL_BART1</name>
<proteinExistence type="inferred from homology"/>
<accession>A9IVH5</accession>
<feature type="chain" id="PRO_1000080548" description="Phosphoribosylformylglycinamidine synthase subunit PurL">
    <location>
        <begin position="1"/>
        <end position="736"/>
    </location>
</feature>
<feature type="active site" evidence="1">
    <location>
        <position position="50"/>
    </location>
</feature>
<feature type="active site" description="Proton acceptor" evidence="1">
    <location>
        <position position="96"/>
    </location>
</feature>
<feature type="binding site" evidence="1">
    <location>
        <position position="53"/>
    </location>
    <ligand>
        <name>ATP</name>
        <dbReference type="ChEBI" id="CHEBI:30616"/>
    </ligand>
</feature>
<feature type="binding site" evidence="1">
    <location>
        <position position="92"/>
    </location>
    <ligand>
        <name>ATP</name>
        <dbReference type="ChEBI" id="CHEBI:30616"/>
    </ligand>
</feature>
<feature type="binding site" evidence="1">
    <location>
        <position position="94"/>
    </location>
    <ligand>
        <name>Mg(2+)</name>
        <dbReference type="ChEBI" id="CHEBI:18420"/>
        <label>1</label>
    </ligand>
</feature>
<feature type="binding site" evidence="1">
    <location>
        <begin position="95"/>
        <end position="98"/>
    </location>
    <ligand>
        <name>substrate</name>
    </ligand>
</feature>
<feature type="binding site" evidence="1">
    <location>
        <position position="117"/>
    </location>
    <ligand>
        <name>substrate</name>
    </ligand>
</feature>
<feature type="binding site" evidence="1">
    <location>
        <position position="118"/>
    </location>
    <ligand>
        <name>Mg(2+)</name>
        <dbReference type="ChEBI" id="CHEBI:18420"/>
        <label>2</label>
    </ligand>
</feature>
<feature type="binding site" evidence="1">
    <location>
        <position position="241"/>
    </location>
    <ligand>
        <name>substrate</name>
    </ligand>
</feature>
<feature type="binding site" evidence="1">
    <location>
        <position position="269"/>
    </location>
    <ligand>
        <name>Mg(2+)</name>
        <dbReference type="ChEBI" id="CHEBI:18420"/>
        <label>2</label>
    </ligand>
</feature>
<feature type="binding site" evidence="1">
    <location>
        <begin position="313"/>
        <end position="315"/>
    </location>
    <ligand>
        <name>substrate</name>
    </ligand>
</feature>
<feature type="binding site" evidence="1">
    <location>
        <position position="495"/>
    </location>
    <ligand>
        <name>ATP</name>
        <dbReference type="ChEBI" id="CHEBI:30616"/>
    </ligand>
</feature>
<feature type="binding site" evidence="1">
    <location>
        <position position="532"/>
    </location>
    <ligand>
        <name>ATP</name>
        <dbReference type="ChEBI" id="CHEBI:30616"/>
    </ligand>
</feature>
<feature type="binding site" evidence="1">
    <location>
        <position position="533"/>
    </location>
    <ligand>
        <name>Mg(2+)</name>
        <dbReference type="ChEBI" id="CHEBI:18420"/>
        <label>1</label>
    </ligand>
</feature>
<feature type="binding site" evidence="1">
    <location>
        <position position="535"/>
    </location>
    <ligand>
        <name>substrate</name>
    </ligand>
</feature>
<gene>
    <name evidence="1" type="primary">purL</name>
    <name type="ordered locus">BT_1353</name>
</gene>
<dbReference type="EC" id="6.3.5.3" evidence="1"/>
<dbReference type="EMBL" id="AM260525">
    <property type="protein sequence ID" value="CAK01715.1"/>
    <property type="molecule type" value="Genomic_DNA"/>
</dbReference>
<dbReference type="RefSeq" id="WP_012231896.1">
    <property type="nucleotide sequence ID" value="NC_010161.1"/>
</dbReference>
<dbReference type="SMR" id="A9IVH5"/>
<dbReference type="KEGG" id="btr:BT_1353"/>
<dbReference type="eggNOG" id="COG0046">
    <property type="taxonomic scope" value="Bacteria"/>
</dbReference>
<dbReference type="HOGENOM" id="CLU_003100_0_1_5"/>
<dbReference type="UniPathway" id="UPA00074">
    <property type="reaction ID" value="UER00128"/>
</dbReference>
<dbReference type="Proteomes" id="UP000001592">
    <property type="component" value="Chromosome"/>
</dbReference>
<dbReference type="GO" id="GO:0005737">
    <property type="term" value="C:cytoplasm"/>
    <property type="evidence" value="ECO:0007669"/>
    <property type="project" value="UniProtKB-SubCell"/>
</dbReference>
<dbReference type="GO" id="GO:0005524">
    <property type="term" value="F:ATP binding"/>
    <property type="evidence" value="ECO:0007669"/>
    <property type="project" value="UniProtKB-UniRule"/>
</dbReference>
<dbReference type="GO" id="GO:0000287">
    <property type="term" value="F:magnesium ion binding"/>
    <property type="evidence" value="ECO:0007669"/>
    <property type="project" value="UniProtKB-UniRule"/>
</dbReference>
<dbReference type="GO" id="GO:0004642">
    <property type="term" value="F:phosphoribosylformylglycinamidine synthase activity"/>
    <property type="evidence" value="ECO:0007669"/>
    <property type="project" value="UniProtKB-UniRule"/>
</dbReference>
<dbReference type="GO" id="GO:0006189">
    <property type="term" value="P:'de novo' IMP biosynthetic process"/>
    <property type="evidence" value="ECO:0007669"/>
    <property type="project" value="UniProtKB-UniRule"/>
</dbReference>
<dbReference type="CDD" id="cd02203">
    <property type="entry name" value="PurL_repeat1"/>
    <property type="match status" value="1"/>
</dbReference>
<dbReference type="CDD" id="cd02204">
    <property type="entry name" value="PurL_repeat2"/>
    <property type="match status" value="1"/>
</dbReference>
<dbReference type="FunFam" id="3.30.1330.10:FF:000004">
    <property type="entry name" value="Phosphoribosylformylglycinamidine synthase subunit PurL"/>
    <property type="match status" value="1"/>
</dbReference>
<dbReference type="Gene3D" id="3.90.650.10">
    <property type="entry name" value="PurM-like C-terminal domain"/>
    <property type="match status" value="2"/>
</dbReference>
<dbReference type="Gene3D" id="3.30.1330.10">
    <property type="entry name" value="PurM-like, N-terminal domain"/>
    <property type="match status" value="2"/>
</dbReference>
<dbReference type="HAMAP" id="MF_00420">
    <property type="entry name" value="PurL_2"/>
    <property type="match status" value="1"/>
</dbReference>
<dbReference type="InterPro" id="IPR010074">
    <property type="entry name" value="PRibForGlyAmidine_synth_PurL"/>
</dbReference>
<dbReference type="InterPro" id="IPR041609">
    <property type="entry name" value="PurL_linker"/>
</dbReference>
<dbReference type="InterPro" id="IPR010918">
    <property type="entry name" value="PurM-like_C_dom"/>
</dbReference>
<dbReference type="InterPro" id="IPR036676">
    <property type="entry name" value="PurM-like_C_sf"/>
</dbReference>
<dbReference type="InterPro" id="IPR016188">
    <property type="entry name" value="PurM-like_N"/>
</dbReference>
<dbReference type="InterPro" id="IPR036921">
    <property type="entry name" value="PurM-like_N_sf"/>
</dbReference>
<dbReference type="NCBIfam" id="TIGR01736">
    <property type="entry name" value="FGAM_synth_II"/>
    <property type="match status" value="1"/>
</dbReference>
<dbReference type="NCBIfam" id="NF002290">
    <property type="entry name" value="PRK01213.1"/>
    <property type="match status" value="1"/>
</dbReference>
<dbReference type="PANTHER" id="PTHR43555">
    <property type="entry name" value="PHOSPHORIBOSYLFORMYLGLYCINAMIDINE SYNTHASE SUBUNIT PURL"/>
    <property type="match status" value="1"/>
</dbReference>
<dbReference type="PANTHER" id="PTHR43555:SF1">
    <property type="entry name" value="PHOSPHORIBOSYLFORMYLGLYCINAMIDINE SYNTHASE SUBUNIT PURL"/>
    <property type="match status" value="1"/>
</dbReference>
<dbReference type="Pfam" id="PF00586">
    <property type="entry name" value="AIRS"/>
    <property type="match status" value="2"/>
</dbReference>
<dbReference type="Pfam" id="PF02769">
    <property type="entry name" value="AIRS_C"/>
    <property type="match status" value="2"/>
</dbReference>
<dbReference type="Pfam" id="PF18072">
    <property type="entry name" value="FGAR-AT_linker"/>
    <property type="match status" value="1"/>
</dbReference>
<dbReference type="PIRSF" id="PIRSF001587">
    <property type="entry name" value="FGAM_synthase_II"/>
    <property type="match status" value="1"/>
</dbReference>
<dbReference type="SUPFAM" id="SSF56042">
    <property type="entry name" value="PurM C-terminal domain-like"/>
    <property type="match status" value="2"/>
</dbReference>
<dbReference type="SUPFAM" id="SSF55326">
    <property type="entry name" value="PurM N-terminal domain-like"/>
    <property type="match status" value="2"/>
</dbReference>
<keyword id="KW-0067">ATP-binding</keyword>
<keyword id="KW-0963">Cytoplasm</keyword>
<keyword id="KW-0436">Ligase</keyword>
<keyword id="KW-0460">Magnesium</keyword>
<keyword id="KW-0479">Metal-binding</keyword>
<keyword id="KW-0547">Nucleotide-binding</keyword>
<keyword id="KW-0658">Purine biosynthesis</keyword>
<reference key="1">
    <citation type="journal article" date="2007" name="Nat. Genet.">
        <title>Genomic analysis of Bartonella identifies type IV secretion systems as host adaptability factors.</title>
        <authorList>
            <person name="Saenz H.L."/>
            <person name="Engel P."/>
            <person name="Stoeckli M.C."/>
            <person name="Lanz C."/>
            <person name="Raddatz G."/>
            <person name="Vayssier-Taussat M."/>
            <person name="Birtles R."/>
            <person name="Schuster S.C."/>
            <person name="Dehio C."/>
        </authorList>
    </citation>
    <scope>NUCLEOTIDE SEQUENCE [LARGE SCALE GENOMIC DNA]</scope>
    <source>
        <strain>CIP 105476 / IBS 506</strain>
    </source>
</reference>
<comment type="function">
    <text evidence="1">Part of the phosphoribosylformylglycinamidine synthase complex involved in the purines biosynthetic pathway. Catalyzes the ATP-dependent conversion of formylglycinamide ribonucleotide (FGAR) and glutamine to yield formylglycinamidine ribonucleotide (FGAM) and glutamate. The FGAM synthase complex is composed of three subunits. PurQ produces an ammonia molecule by converting glutamine to glutamate. PurL transfers the ammonia molecule to FGAR to form FGAM in an ATP-dependent manner. PurS interacts with PurQ and PurL and is thought to assist in the transfer of the ammonia molecule from PurQ to PurL.</text>
</comment>
<comment type="catalytic activity">
    <reaction evidence="1">
        <text>N(2)-formyl-N(1)-(5-phospho-beta-D-ribosyl)glycinamide + L-glutamine + ATP + H2O = 2-formamido-N(1)-(5-O-phospho-beta-D-ribosyl)acetamidine + L-glutamate + ADP + phosphate + H(+)</text>
        <dbReference type="Rhea" id="RHEA:17129"/>
        <dbReference type="ChEBI" id="CHEBI:15377"/>
        <dbReference type="ChEBI" id="CHEBI:15378"/>
        <dbReference type="ChEBI" id="CHEBI:29985"/>
        <dbReference type="ChEBI" id="CHEBI:30616"/>
        <dbReference type="ChEBI" id="CHEBI:43474"/>
        <dbReference type="ChEBI" id="CHEBI:58359"/>
        <dbReference type="ChEBI" id="CHEBI:147286"/>
        <dbReference type="ChEBI" id="CHEBI:147287"/>
        <dbReference type="ChEBI" id="CHEBI:456216"/>
        <dbReference type="EC" id="6.3.5.3"/>
    </reaction>
</comment>
<comment type="pathway">
    <text evidence="1">Purine metabolism; IMP biosynthesis via de novo pathway; 5-amino-1-(5-phospho-D-ribosyl)imidazole from N(2)-formyl-N(1)-(5-phospho-D-ribosyl)glycinamide: step 1/2.</text>
</comment>
<comment type="subunit">
    <text evidence="1">Monomer. Part of the FGAM synthase complex composed of 1 PurL, 1 PurQ and 2 PurS subunits.</text>
</comment>
<comment type="subcellular location">
    <subcellularLocation>
        <location evidence="1">Cytoplasm</location>
    </subcellularLocation>
</comment>
<comment type="similarity">
    <text evidence="1">Belongs to the FGAMS family.</text>
</comment>
<organism>
    <name type="scientific">Bartonella tribocorum (strain CIP 105476 / IBS 506)</name>
    <dbReference type="NCBI Taxonomy" id="382640"/>
    <lineage>
        <taxon>Bacteria</taxon>
        <taxon>Pseudomonadati</taxon>
        <taxon>Pseudomonadota</taxon>
        <taxon>Alphaproteobacteria</taxon>
        <taxon>Hyphomicrobiales</taxon>
        <taxon>Bartonellaceae</taxon>
        <taxon>Bartonella</taxon>
    </lineage>
</organism>
<protein>
    <recommendedName>
        <fullName evidence="1">Phosphoribosylformylglycinamidine synthase subunit PurL</fullName>
        <shortName evidence="1">FGAM synthase</shortName>
        <ecNumber evidence="1">6.3.5.3</ecNumber>
    </recommendedName>
    <alternativeName>
        <fullName evidence="1">Formylglycinamide ribonucleotide amidotransferase subunit II</fullName>
        <shortName evidence="1">FGAR amidotransferase II</shortName>
        <shortName evidence="1">FGAR-AT II</shortName>
    </alternativeName>
    <alternativeName>
        <fullName evidence="1">Glutamine amidotransferase PurL</fullName>
    </alternativeName>
    <alternativeName>
        <fullName evidence="1">Phosphoribosylformylglycinamidine synthase subunit II</fullName>
    </alternativeName>
</protein>